<organism>
    <name type="scientific">Deinococcus radiodurans (strain ATCC 13939 / DSM 20539 / JCM 16871 / CCUG 27074 / LMG 4051 / NBRC 15346 / NCIMB 9279 / VKM B-1422 / R1)</name>
    <dbReference type="NCBI Taxonomy" id="243230"/>
    <lineage>
        <taxon>Bacteria</taxon>
        <taxon>Thermotogati</taxon>
        <taxon>Deinococcota</taxon>
        <taxon>Deinococci</taxon>
        <taxon>Deinococcales</taxon>
        <taxon>Deinococcaceae</taxon>
        <taxon>Deinococcus</taxon>
    </lineage>
</organism>
<protein>
    <recommendedName>
        <fullName evidence="1">33 kDa chaperonin</fullName>
    </recommendedName>
    <alternativeName>
        <fullName evidence="1">Heat shock protein 33 homolog</fullName>
        <shortName evidence="1">HSP33</shortName>
    </alternativeName>
</protein>
<keyword id="KW-0143">Chaperone</keyword>
<keyword id="KW-0963">Cytoplasm</keyword>
<keyword id="KW-1015">Disulfide bond</keyword>
<keyword id="KW-0676">Redox-active center</keyword>
<keyword id="KW-1185">Reference proteome</keyword>
<keyword id="KW-0862">Zinc</keyword>
<proteinExistence type="inferred from homology"/>
<name>HSLO_DEIRA</name>
<sequence>MLRGTAAGGTLRLVGIEASKVVEEARRRHNLSKTATAALGRTMAASALLAVVLGKRTDSRVTVRVDGGGPVGWIVAEGSTDGRLRGYVRQPEADLPPRESDGKLDVRGIVGTDGELAVTRLLDNGEPYTGSVRLQSGEIAEDVSRYLGASEQIPNAVLLGVYEEGGRVANAGGLLIQAMPGVTDETLAKLEANIAAMGMLTDQLRNGGLLGAMQQAAAGLDLQLATDAQPAHFSCRCSREKAIDSLKFFGAEERQEMIDEGGQEVLCHWCSEKYHLTPEEIAALDEGEARAEA</sequence>
<comment type="function">
    <text evidence="1">Redox regulated molecular chaperone. Protects both thermally unfolding and oxidatively damaged proteins from irreversible aggregation. Plays an important role in the bacterial defense system toward oxidative stress.</text>
</comment>
<comment type="subcellular location">
    <subcellularLocation>
        <location evidence="1">Cytoplasm</location>
    </subcellularLocation>
</comment>
<comment type="PTM">
    <text evidence="1">Under oxidizing conditions two disulfide bonds are formed involving the reactive cysteines. Under reducing conditions zinc is bound to the reactive cysteines and the protein is inactive.</text>
</comment>
<comment type="similarity">
    <text evidence="1">Belongs to the HSP33 family.</text>
</comment>
<comment type="sequence caution" evidence="2">
    <conflict type="erroneous initiation">
        <sequence resource="EMBL-CDS" id="AAF10561"/>
    </conflict>
</comment>
<evidence type="ECO:0000255" key="1">
    <source>
        <dbReference type="HAMAP-Rule" id="MF_00117"/>
    </source>
</evidence>
<evidence type="ECO:0000305" key="2"/>
<dbReference type="EMBL" id="AE000513">
    <property type="protein sequence ID" value="AAF10561.1"/>
    <property type="status" value="ALT_INIT"/>
    <property type="molecule type" value="Genomic_DNA"/>
</dbReference>
<dbReference type="PIR" id="C75450">
    <property type="entry name" value="C75450"/>
</dbReference>
<dbReference type="RefSeq" id="NP_294709.1">
    <property type="nucleotide sequence ID" value="NC_001263.1"/>
</dbReference>
<dbReference type="RefSeq" id="WP_027479663.1">
    <property type="nucleotide sequence ID" value="NC_001263.1"/>
</dbReference>
<dbReference type="SMR" id="P56925"/>
<dbReference type="FunCoup" id="P56925">
    <property type="interactions" value="124"/>
</dbReference>
<dbReference type="STRING" id="243230.DR_0985"/>
<dbReference type="PaxDb" id="243230-DR_0985"/>
<dbReference type="EnsemblBacteria" id="AAF10561">
    <property type="protein sequence ID" value="AAF10561"/>
    <property type="gene ID" value="DR_0985"/>
</dbReference>
<dbReference type="GeneID" id="69517232"/>
<dbReference type="KEGG" id="dra:DR_0985"/>
<dbReference type="PATRIC" id="fig|243230.17.peg.1174"/>
<dbReference type="eggNOG" id="COG1281">
    <property type="taxonomic scope" value="Bacteria"/>
</dbReference>
<dbReference type="HOGENOM" id="CLU_054493_1_0_0"/>
<dbReference type="InParanoid" id="P56925"/>
<dbReference type="OrthoDB" id="9776534at2"/>
<dbReference type="Proteomes" id="UP000002524">
    <property type="component" value="Chromosome 1"/>
</dbReference>
<dbReference type="GO" id="GO:0005737">
    <property type="term" value="C:cytoplasm"/>
    <property type="evidence" value="ECO:0000318"/>
    <property type="project" value="GO_Central"/>
</dbReference>
<dbReference type="GO" id="GO:0044183">
    <property type="term" value="F:protein folding chaperone"/>
    <property type="evidence" value="ECO:0000318"/>
    <property type="project" value="GO_Central"/>
</dbReference>
<dbReference type="GO" id="GO:0051082">
    <property type="term" value="F:unfolded protein binding"/>
    <property type="evidence" value="ECO:0007669"/>
    <property type="project" value="UniProtKB-UniRule"/>
</dbReference>
<dbReference type="GO" id="GO:0042026">
    <property type="term" value="P:protein refolding"/>
    <property type="evidence" value="ECO:0000318"/>
    <property type="project" value="GO_Central"/>
</dbReference>
<dbReference type="CDD" id="cd00498">
    <property type="entry name" value="Hsp33"/>
    <property type="match status" value="1"/>
</dbReference>
<dbReference type="Gene3D" id="3.55.30.10">
    <property type="entry name" value="Hsp33 domain"/>
    <property type="match status" value="1"/>
</dbReference>
<dbReference type="Gene3D" id="3.90.1280.10">
    <property type="entry name" value="HSP33 redox switch-like"/>
    <property type="match status" value="1"/>
</dbReference>
<dbReference type="HAMAP" id="MF_00117">
    <property type="entry name" value="HslO"/>
    <property type="match status" value="1"/>
</dbReference>
<dbReference type="InterPro" id="IPR000397">
    <property type="entry name" value="Heat_shock_Hsp33"/>
</dbReference>
<dbReference type="InterPro" id="IPR016154">
    <property type="entry name" value="Heat_shock_Hsp33_C"/>
</dbReference>
<dbReference type="InterPro" id="IPR016153">
    <property type="entry name" value="Heat_shock_Hsp33_N"/>
</dbReference>
<dbReference type="NCBIfam" id="NF001033">
    <property type="entry name" value="PRK00114.1"/>
    <property type="match status" value="1"/>
</dbReference>
<dbReference type="PANTHER" id="PTHR30111">
    <property type="entry name" value="33 KDA CHAPERONIN"/>
    <property type="match status" value="1"/>
</dbReference>
<dbReference type="PANTHER" id="PTHR30111:SF1">
    <property type="entry name" value="33 KDA CHAPERONIN"/>
    <property type="match status" value="1"/>
</dbReference>
<dbReference type="Pfam" id="PF01430">
    <property type="entry name" value="HSP33"/>
    <property type="match status" value="1"/>
</dbReference>
<dbReference type="PIRSF" id="PIRSF005261">
    <property type="entry name" value="Heat_shock_Hsp33"/>
    <property type="match status" value="1"/>
</dbReference>
<dbReference type="SUPFAM" id="SSF64397">
    <property type="entry name" value="Hsp33 domain"/>
    <property type="match status" value="1"/>
</dbReference>
<dbReference type="SUPFAM" id="SSF118352">
    <property type="entry name" value="HSP33 redox switch-like"/>
    <property type="match status" value="1"/>
</dbReference>
<reference key="1">
    <citation type="journal article" date="1999" name="Science">
        <title>Genome sequence of the radioresistant bacterium Deinococcus radiodurans R1.</title>
        <authorList>
            <person name="White O."/>
            <person name="Eisen J.A."/>
            <person name="Heidelberg J.F."/>
            <person name="Hickey E.K."/>
            <person name="Peterson J.D."/>
            <person name="Dodson R.J."/>
            <person name="Haft D.H."/>
            <person name="Gwinn M.L."/>
            <person name="Nelson W.C."/>
            <person name="Richardson D.L."/>
            <person name="Moffat K.S."/>
            <person name="Qin H."/>
            <person name="Jiang L."/>
            <person name="Pamphile W."/>
            <person name="Crosby M."/>
            <person name="Shen M."/>
            <person name="Vamathevan J.J."/>
            <person name="Lam P."/>
            <person name="McDonald L.A."/>
            <person name="Utterback T.R."/>
            <person name="Zalewski C."/>
            <person name="Makarova K.S."/>
            <person name="Aravind L."/>
            <person name="Daly M.J."/>
            <person name="Minton K.W."/>
            <person name="Fleischmann R.D."/>
            <person name="Ketchum K.A."/>
            <person name="Nelson K.E."/>
            <person name="Salzberg S.L."/>
            <person name="Smith H.O."/>
            <person name="Venter J.C."/>
            <person name="Fraser C.M."/>
        </authorList>
    </citation>
    <scope>NUCLEOTIDE SEQUENCE [LARGE SCALE GENOMIC DNA]</scope>
    <source>
        <strain>ATCC 13939 / DSM 20539 / JCM 16871 / CCUG 27074 / LMG 4051 / NBRC 15346 / NCIMB 9279 / VKM B-1422 / R1</strain>
    </source>
</reference>
<gene>
    <name evidence="1" type="primary">hslO</name>
    <name type="ordered locus">DR_0985</name>
</gene>
<feature type="chain" id="PRO_0000192173" description="33 kDa chaperonin">
    <location>
        <begin position="1"/>
        <end position="293"/>
    </location>
</feature>
<feature type="disulfide bond" description="Redox-active" evidence="1">
    <location>
        <begin position="235"/>
        <end position="237"/>
    </location>
</feature>
<feature type="disulfide bond" description="Redox-active" evidence="1">
    <location>
        <begin position="267"/>
        <end position="270"/>
    </location>
</feature>
<accession>P56925</accession>